<gene>
    <name evidence="1" type="primary">hslU</name>
    <name type="ordered locus">BR2079</name>
    <name type="ordered locus">BS1330_I2073</name>
</gene>
<feature type="chain" id="PRO_0000160485" description="ATP-dependent protease ATPase subunit HslU">
    <location>
        <begin position="1"/>
        <end position="434"/>
    </location>
</feature>
<feature type="binding site" evidence="1">
    <location>
        <position position="18"/>
    </location>
    <ligand>
        <name>ATP</name>
        <dbReference type="ChEBI" id="CHEBI:30616"/>
    </ligand>
</feature>
<feature type="binding site" evidence="1">
    <location>
        <begin position="60"/>
        <end position="65"/>
    </location>
    <ligand>
        <name>ATP</name>
        <dbReference type="ChEBI" id="CHEBI:30616"/>
    </ligand>
</feature>
<feature type="binding site" evidence="1">
    <location>
        <position position="247"/>
    </location>
    <ligand>
        <name>ATP</name>
        <dbReference type="ChEBI" id="CHEBI:30616"/>
    </ligand>
</feature>
<feature type="binding site" evidence="1">
    <location>
        <position position="312"/>
    </location>
    <ligand>
        <name>ATP</name>
        <dbReference type="ChEBI" id="CHEBI:30616"/>
    </ligand>
</feature>
<feature type="binding site" evidence="1">
    <location>
        <position position="384"/>
    </location>
    <ligand>
        <name>ATP</name>
        <dbReference type="ChEBI" id="CHEBI:30616"/>
    </ligand>
</feature>
<keyword id="KW-0067">ATP-binding</keyword>
<keyword id="KW-0143">Chaperone</keyword>
<keyword id="KW-0963">Cytoplasm</keyword>
<keyword id="KW-0547">Nucleotide-binding</keyword>
<organism>
    <name type="scientific">Brucella suis biovar 1 (strain 1330)</name>
    <dbReference type="NCBI Taxonomy" id="204722"/>
    <lineage>
        <taxon>Bacteria</taxon>
        <taxon>Pseudomonadati</taxon>
        <taxon>Pseudomonadota</taxon>
        <taxon>Alphaproteobacteria</taxon>
        <taxon>Hyphomicrobiales</taxon>
        <taxon>Brucellaceae</taxon>
        <taxon>Brucella/Ochrobactrum group</taxon>
        <taxon>Brucella</taxon>
    </lineage>
</organism>
<evidence type="ECO:0000255" key="1">
    <source>
        <dbReference type="HAMAP-Rule" id="MF_00249"/>
    </source>
</evidence>
<accession>Q8FY12</accession>
<accession>G0K927</accession>
<proteinExistence type="inferred from homology"/>
<name>HSLU_BRUSU</name>
<sequence length="434" mass="47957">MSNFSPREIVSELDRFIIGQKDAKRAVAIALRNRWRRQQLEGQMREEVMPKNILMIGPTGVGKTEISRRLAKLAGAPFVKVEATKFTEVGYVGRDVEQIIRDLVEIAITLVREKRREDVKAKAHLNAEERVLDALVGKTASPATRDSFRKKLRNGEMDDKEIEIEVSDSGASPNFEIPGMPGANIGVLNISDMLGKAMGGRTKTRKTTVKDSYPILINDESDKLLDQDQIVQEALRVSEDEGIVFIDEIDKIAAREGGSGAGVSREGVQRDLLPLVEGTTVATKYGPVKTDHILFITSGAFHVSKPSDLLPELQGRLPIRVELSALTREDFRRILTETEASLIKQYIALMETEEVKLEFSDDAIDALADIAVDLNATVENIGARRLQTVMEKVLDEISFTAPDKAGATFIIDAAYVKEKIGGLAKNTDLSRFIL</sequence>
<dbReference type="EMBL" id="AE014291">
    <property type="protein sequence ID" value="AAN30969.1"/>
    <property type="molecule type" value="Genomic_DNA"/>
</dbReference>
<dbReference type="EMBL" id="CP002997">
    <property type="protein sequence ID" value="AEM19386.1"/>
    <property type="molecule type" value="Genomic_DNA"/>
</dbReference>
<dbReference type="RefSeq" id="WP_002965143.1">
    <property type="nucleotide sequence ID" value="NZ_KN046804.1"/>
</dbReference>
<dbReference type="SMR" id="Q8FY12"/>
<dbReference type="GeneID" id="97534659"/>
<dbReference type="KEGG" id="bms:BR2079"/>
<dbReference type="KEGG" id="bsi:BS1330_I2073"/>
<dbReference type="PATRIC" id="fig|204722.21.peg.1287"/>
<dbReference type="HOGENOM" id="CLU_033123_0_0_5"/>
<dbReference type="PhylomeDB" id="Q8FY12"/>
<dbReference type="Proteomes" id="UP000007104">
    <property type="component" value="Chromosome I"/>
</dbReference>
<dbReference type="GO" id="GO:0009376">
    <property type="term" value="C:HslUV protease complex"/>
    <property type="evidence" value="ECO:0007669"/>
    <property type="project" value="UniProtKB-UniRule"/>
</dbReference>
<dbReference type="GO" id="GO:0005524">
    <property type="term" value="F:ATP binding"/>
    <property type="evidence" value="ECO:0007669"/>
    <property type="project" value="UniProtKB-UniRule"/>
</dbReference>
<dbReference type="GO" id="GO:0016887">
    <property type="term" value="F:ATP hydrolysis activity"/>
    <property type="evidence" value="ECO:0007669"/>
    <property type="project" value="InterPro"/>
</dbReference>
<dbReference type="GO" id="GO:0008233">
    <property type="term" value="F:peptidase activity"/>
    <property type="evidence" value="ECO:0007669"/>
    <property type="project" value="InterPro"/>
</dbReference>
<dbReference type="GO" id="GO:0036402">
    <property type="term" value="F:proteasome-activating activity"/>
    <property type="evidence" value="ECO:0007669"/>
    <property type="project" value="UniProtKB-UniRule"/>
</dbReference>
<dbReference type="GO" id="GO:0043335">
    <property type="term" value="P:protein unfolding"/>
    <property type="evidence" value="ECO:0007669"/>
    <property type="project" value="UniProtKB-UniRule"/>
</dbReference>
<dbReference type="GO" id="GO:0051603">
    <property type="term" value="P:proteolysis involved in protein catabolic process"/>
    <property type="evidence" value="ECO:0007669"/>
    <property type="project" value="TreeGrafter"/>
</dbReference>
<dbReference type="CDD" id="cd19498">
    <property type="entry name" value="RecA-like_HslU"/>
    <property type="match status" value="1"/>
</dbReference>
<dbReference type="FunFam" id="3.40.50.300:FF:000213">
    <property type="entry name" value="ATP-dependent protease ATPase subunit HslU"/>
    <property type="match status" value="1"/>
</dbReference>
<dbReference type="FunFam" id="3.40.50.300:FF:000220">
    <property type="entry name" value="ATP-dependent protease ATPase subunit HslU"/>
    <property type="match status" value="1"/>
</dbReference>
<dbReference type="Gene3D" id="1.10.8.60">
    <property type="match status" value="1"/>
</dbReference>
<dbReference type="Gene3D" id="1.10.8.10">
    <property type="entry name" value="DNA helicase RuvA subunit, C-terminal domain"/>
    <property type="match status" value="1"/>
</dbReference>
<dbReference type="Gene3D" id="3.40.50.300">
    <property type="entry name" value="P-loop containing nucleotide triphosphate hydrolases"/>
    <property type="match status" value="1"/>
</dbReference>
<dbReference type="HAMAP" id="MF_00249">
    <property type="entry name" value="HslU"/>
    <property type="match status" value="1"/>
</dbReference>
<dbReference type="InterPro" id="IPR003593">
    <property type="entry name" value="AAA+_ATPase"/>
</dbReference>
<dbReference type="InterPro" id="IPR050052">
    <property type="entry name" value="ATP-dep_Clp_protease_ClpX"/>
</dbReference>
<dbReference type="InterPro" id="IPR003959">
    <property type="entry name" value="ATPase_AAA_core"/>
</dbReference>
<dbReference type="InterPro" id="IPR019489">
    <property type="entry name" value="Clp_ATPase_C"/>
</dbReference>
<dbReference type="InterPro" id="IPR004491">
    <property type="entry name" value="HslU"/>
</dbReference>
<dbReference type="InterPro" id="IPR027417">
    <property type="entry name" value="P-loop_NTPase"/>
</dbReference>
<dbReference type="NCBIfam" id="TIGR00390">
    <property type="entry name" value="hslU"/>
    <property type="match status" value="1"/>
</dbReference>
<dbReference type="NCBIfam" id="NF003544">
    <property type="entry name" value="PRK05201.1"/>
    <property type="match status" value="1"/>
</dbReference>
<dbReference type="PANTHER" id="PTHR48102">
    <property type="entry name" value="ATP-DEPENDENT CLP PROTEASE ATP-BINDING SUBUNIT CLPX-LIKE, MITOCHONDRIAL-RELATED"/>
    <property type="match status" value="1"/>
</dbReference>
<dbReference type="PANTHER" id="PTHR48102:SF3">
    <property type="entry name" value="ATP-DEPENDENT PROTEASE ATPASE SUBUNIT HSLU"/>
    <property type="match status" value="1"/>
</dbReference>
<dbReference type="Pfam" id="PF00004">
    <property type="entry name" value="AAA"/>
    <property type="match status" value="1"/>
</dbReference>
<dbReference type="Pfam" id="PF07724">
    <property type="entry name" value="AAA_2"/>
    <property type="match status" value="1"/>
</dbReference>
<dbReference type="SMART" id="SM00382">
    <property type="entry name" value="AAA"/>
    <property type="match status" value="1"/>
</dbReference>
<dbReference type="SMART" id="SM01086">
    <property type="entry name" value="ClpB_D2-small"/>
    <property type="match status" value="1"/>
</dbReference>
<dbReference type="SUPFAM" id="SSF52540">
    <property type="entry name" value="P-loop containing nucleoside triphosphate hydrolases"/>
    <property type="match status" value="1"/>
</dbReference>
<comment type="function">
    <text evidence="1">ATPase subunit of a proteasome-like degradation complex; this subunit has chaperone activity. The binding of ATP and its subsequent hydrolysis by HslU are essential for unfolding of protein substrates subsequently hydrolyzed by HslV. HslU recognizes the N-terminal part of its protein substrates and unfolds these before they are guided to HslV for hydrolysis.</text>
</comment>
<comment type="subunit">
    <text evidence="1">A double ring-shaped homohexamer of HslV is capped on each side by a ring-shaped HslU homohexamer. The assembly of the HslU/HslV complex is dependent on binding of ATP.</text>
</comment>
<comment type="subcellular location">
    <subcellularLocation>
        <location evidence="1">Cytoplasm</location>
    </subcellularLocation>
</comment>
<comment type="similarity">
    <text evidence="1">Belongs to the ClpX chaperone family. HslU subfamily.</text>
</comment>
<reference key="1">
    <citation type="journal article" date="2002" name="Proc. Natl. Acad. Sci. U.S.A.">
        <title>The Brucella suis genome reveals fundamental similarities between animal and plant pathogens and symbionts.</title>
        <authorList>
            <person name="Paulsen I.T."/>
            <person name="Seshadri R."/>
            <person name="Nelson K.E."/>
            <person name="Eisen J.A."/>
            <person name="Heidelberg J.F."/>
            <person name="Read T.D."/>
            <person name="Dodson R.J."/>
            <person name="Umayam L.A."/>
            <person name="Brinkac L.M."/>
            <person name="Beanan M.J."/>
            <person name="Daugherty S.C."/>
            <person name="DeBoy R.T."/>
            <person name="Durkin A.S."/>
            <person name="Kolonay J.F."/>
            <person name="Madupu R."/>
            <person name="Nelson W.C."/>
            <person name="Ayodeji B."/>
            <person name="Kraul M."/>
            <person name="Shetty J."/>
            <person name="Malek J.A."/>
            <person name="Van Aken S.E."/>
            <person name="Riedmuller S."/>
            <person name="Tettelin H."/>
            <person name="Gill S.R."/>
            <person name="White O."/>
            <person name="Salzberg S.L."/>
            <person name="Hoover D.L."/>
            <person name="Lindler L.E."/>
            <person name="Halling S.M."/>
            <person name="Boyle S.M."/>
            <person name="Fraser C.M."/>
        </authorList>
    </citation>
    <scope>NUCLEOTIDE SEQUENCE [LARGE SCALE GENOMIC DNA]</scope>
    <source>
        <strain>1330</strain>
    </source>
</reference>
<reference key="2">
    <citation type="journal article" date="2011" name="J. Bacteriol.">
        <title>Revised genome sequence of Brucella suis 1330.</title>
        <authorList>
            <person name="Tae H."/>
            <person name="Shallom S."/>
            <person name="Settlage R."/>
            <person name="Preston D."/>
            <person name="Adams L.G."/>
            <person name="Garner H.R."/>
        </authorList>
    </citation>
    <scope>NUCLEOTIDE SEQUENCE [LARGE SCALE GENOMIC DNA]</scope>
    <source>
        <strain>1330</strain>
    </source>
</reference>
<protein>
    <recommendedName>
        <fullName evidence="1">ATP-dependent protease ATPase subunit HslU</fullName>
    </recommendedName>
    <alternativeName>
        <fullName evidence="1">Unfoldase HslU</fullName>
    </alternativeName>
</protein>